<dbReference type="EC" id="7.1.1.9"/>
<dbReference type="EMBL" id="M77212">
    <property type="protein sequence ID" value="AAA79956.1"/>
    <property type="molecule type" value="Genomic_DNA"/>
</dbReference>
<dbReference type="SMR" id="P50268"/>
<dbReference type="GO" id="GO:0005743">
    <property type="term" value="C:mitochondrial inner membrane"/>
    <property type="evidence" value="ECO:0007669"/>
    <property type="project" value="UniProtKB-SubCell"/>
</dbReference>
<dbReference type="GO" id="GO:0005507">
    <property type="term" value="F:copper ion binding"/>
    <property type="evidence" value="ECO:0007669"/>
    <property type="project" value="InterPro"/>
</dbReference>
<dbReference type="GO" id="GO:0004129">
    <property type="term" value="F:cytochrome-c oxidase activity"/>
    <property type="evidence" value="ECO:0007669"/>
    <property type="project" value="UniProtKB-EC"/>
</dbReference>
<dbReference type="GO" id="GO:0042773">
    <property type="term" value="P:ATP synthesis coupled electron transport"/>
    <property type="evidence" value="ECO:0007669"/>
    <property type="project" value="TreeGrafter"/>
</dbReference>
<dbReference type="CDD" id="cd13912">
    <property type="entry name" value="CcO_II_C"/>
    <property type="match status" value="1"/>
</dbReference>
<dbReference type="FunFam" id="2.60.40.420:FF:000001">
    <property type="entry name" value="Cytochrome c oxidase subunit 2"/>
    <property type="match status" value="1"/>
</dbReference>
<dbReference type="Gene3D" id="1.10.287.90">
    <property type="match status" value="1"/>
</dbReference>
<dbReference type="Gene3D" id="2.60.40.420">
    <property type="entry name" value="Cupredoxins - blue copper proteins"/>
    <property type="match status" value="1"/>
</dbReference>
<dbReference type="InterPro" id="IPR045187">
    <property type="entry name" value="CcO_II"/>
</dbReference>
<dbReference type="InterPro" id="IPR002429">
    <property type="entry name" value="CcO_II-like_C"/>
</dbReference>
<dbReference type="InterPro" id="IPR034210">
    <property type="entry name" value="CcO_II_C"/>
</dbReference>
<dbReference type="InterPro" id="IPR001505">
    <property type="entry name" value="Copper_CuA"/>
</dbReference>
<dbReference type="InterPro" id="IPR008972">
    <property type="entry name" value="Cupredoxin"/>
</dbReference>
<dbReference type="InterPro" id="IPR014222">
    <property type="entry name" value="Cyt_c_oxidase_su2"/>
</dbReference>
<dbReference type="InterPro" id="IPR011759">
    <property type="entry name" value="Cyt_c_oxidase_su2_TM_dom"/>
</dbReference>
<dbReference type="InterPro" id="IPR036257">
    <property type="entry name" value="Cyt_c_oxidase_su2_TM_sf"/>
</dbReference>
<dbReference type="NCBIfam" id="TIGR02866">
    <property type="entry name" value="CoxB"/>
    <property type="match status" value="1"/>
</dbReference>
<dbReference type="PANTHER" id="PTHR22888:SF9">
    <property type="entry name" value="CYTOCHROME C OXIDASE SUBUNIT 2"/>
    <property type="match status" value="1"/>
</dbReference>
<dbReference type="PANTHER" id="PTHR22888">
    <property type="entry name" value="CYTOCHROME C OXIDASE, SUBUNIT II"/>
    <property type="match status" value="1"/>
</dbReference>
<dbReference type="Pfam" id="PF00116">
    <property type="entry name" value="COX2"/>
    <property type="match status" value="1"/>
</dbReference>
<dbReference type="Pfam" id="PF02790">
    <property type="entry name" value="COX2_TM"/>
    <property type="match status" value="1"/>
</dbReference>
<dbReference type="PRINTS" id="PR01166">
    <property type="entry name" value="CYCOXIDASEII"/>
</dbReference>
<dbReference type="SUPFAM" id="SSF49503">
    <property type="entry name" value="Cupredoxins"/>
    <property type="match status" value="1"/>
</dbReference>
<dbReference type="SUPFAM" id="SSF81464">
    <property type="entry name" value="Cytochrome c oxidase subunit II-like, transmembrane region"/>
    <property type="match status" value="1"/>
</dbReference>
<dbReference type="PROSITE" id="PS00078">
    <property type="entry name" value="COX2"/>
    <property type="match status" value="1"/>
</dbReference>
<dbReference type="PROSITE" id="PS50857">
    <property type="entry name" value="COX2_CUA"/>
    <property type="match status" value="1"/>
</dbReference>
<dbReference type="PROSITE" id="PS50999">
    <property type="entry name" value="COX2_TM"/>
    <property type="match status" value="1"/>
</dbReference>
<feature type="chain" id="PRO_0000183498" description="Cytochrome c oxidase subunit 2">
    <location>
        <begin position="1"/>
        <end position="225"/>
    </location>
</feature>
<feature type="topological domain" description="Mitochondrial intermembrane" evidence="2">
    <location>
        <begin position="1"/>
        <end position="25"/>
    </location>
</feature>
<feature type="transmembrane region" description="Helical" evidence="2">
    <location>
        <begin position="26"/>
        <end position="47"/>
    </location>
</feature>
<feature type="topological domain" description="Mitochondrial matrix" evidence="2">
    <location>
        <begin position="48"/>
        <end position="62"/>
    </location>
</feature>
<feature type="transmembrane region" description="Helical" evidence="2">
    <location>
        <begin position="63"/>
        <end position="82"/>
    </location>
</feature>
<feature type="topological domain" description="Mitochondrial intermembrane" evidence="2">
    <location>
        <begin position="83"/>
        <end position="225"/>
    </location>
</feature>
<feature type="binding site" evidence="1">
    <location>
        <position position="159"/>
    </location>
    <ligand>
        <name>Cu cation</name>
        <dbReference type="ChEBI" id="CHEBI:23378"/>
        <label>A1</label>
    </ligand>
</feature>
<feature type="binding site" evidence="1">
    <location>
        <position position="194"/>
    </location>
    <ligand>
        <name>Cu cation</name>
        <dbReference type="ChEBI" id="CHEBI:23378"/>
        <label>A1</label>
    </ligand>
</feature>
<feature type="binding site" evidence="1">
    <location>
        <position position="194"/>
    </location>
    <ligand>
        <name>Cu cation</name>
        <dbReference type="ChEBI" id="CHEBI:23378"/>
        <label>A2</label>
    </ligand>
</feature>
<feature type="binding site" evidence="1">
    <location>
        <position position="196"/>
    </location>
    <ligand>
        <name>Cu cation</name>
        <dbReference type="ChEBI" id="CHEBI:23378"/>
        <label>A2</label>
    </ligand>
</feature>
<feature type="binding site" evidence="1">
    <location>
        <position position="196"/>
    </location>
    <ligand>
        <name>Mg(2+)</name>
        <dbReference type="ChEBI" id="CHEBI:18420"/>
        <note>ligand shared with subunit 1</note>
    </ligand>
</feature>
<feature type="binding site" evidence="1">
    <location>
        <position position="198"/>
    </location>
    <ligand>
        <name>Cu cation</name>
        <dbReference type="ChEBI" id="CHEBI:23378"/>
        <label>A1</label>
    </ligand>
</feature>
<feature type="binding site" evidence="1">
    <location>
        <position position="198"/>
    </location>
    <ligand>
        <name>Cu cation</name>
        <dbReference type="ChEBI" id="CHEBI:23378"/>
        <label>A2</label>
    </ligand>
</feature>
<feature type="binding site" evidence="1">
    <location>
        <position position="202"/>
    </location>
    <ligand>
        <name>Cu cation</name>
        <dbReference type="ChEBI" id="CHEBI:23378"/>
        <label>A2</label>
    </ligand>
</feature>
<feature type="binding site" evidence="1">
    <location>
        <position position="205"/>
    </location>
    <ligand>
        <name>Cu cation</name>
        <dbReference type="ChEBI" id="CHEBI:23378"/>
        <label>A1</label>
    </ligand>
</feature>
<geneLocation type="mitochondrion"/>
<sequence>MSTWMMFMFQESNSFYADNLVSFHNLVMMIIIMISTLTIYIIFDLFMNKFSNLFLLKNHNIEIIWTIVPIVILLIICFPSLKILYLIDEIINPFFSIKSIGHQWYWSYEYPEFNNIEFDSYMLNYSNLNQFRLLETDNRMIIPMKIPMRLITTSTDVIHSWTVPSLGIKVDAVPGRINQLNLISKRPGIFFGQCSEICGMNHSFMPIMVESTSFKFFLNWINKQN</sequence>
<proteinExistence type="inferred from homology"/>
<organism>
    <name type="scientific">Apis koschevnikovi</name>
    <name type="common">Koschevnikov's honey bee</name>
    <dbReference type="NCBI Taxonomy" id="7468"/>
    <lineage>
        <taxon>Eukaryota</taxon>
        <taxon>Metazoa</taxon>
        <taxon>Ecdysozoa</taxon>
        <taxon>Arthropoda</taxon>
        <taxon>Hexapoda</taxon>
        <taxon>Insecta</taxon>
        <taxon>Pterygota</taxon>
        <taxon>Neoptera</taxon>
        <taxon>Endopterygota</taxon>
        <taxon>Hymenoptera</taxon>
        <taxon>Apocrita</taxon>
        <taxon>Aculeata</taxon>
        <taxon>Apoidea</taxon>
        <taxon>Anthophila</taxon>
        <taxon>Apidae</taxon>
        <taxon>Apis</taxon>
    </lineage>
</organism>
<comment type="function">
    <text evidence="1">Component of the cytochrome c oxidase, the last enzyme in the mitochondrial electron transport chain which drives oxidative phosphorylation. The respiratory chain contains 3 multisubunit complexes succinate dehydrogenase (complex II, CII), ubiquinol-cytochrome c oxidoreductase (cytochrome b-c1 complex, complex III, CIII) and cytochrome c oxidase (complex IV, CIV), that cooperate to transfer electrons derived from NADH and succinate to molecular oxygen, creating an electrochemical gradient over the inner membrane that drives transmembrane transport and the ATP synthase. Cytochrome c oxidase is the component of the respiratory chain that catalyzes the reduction of oxygen to water. Electrons originating from reduced cytochrome c in the intermembrane space (IMS) are transferred via the dinuclear copper A center (CU(A)) of subunit 2 and heme A of subunit 1 to the active site in subunit 1, a binuclear center (BNC) formed by heme A3 and copper B (CU(B)). The BNC reduces molecular oxygen to 2 water molecules using 4 electrons from cytochrome c in the IMS and 4 protons from the mitochondrial matrix.</text>
</comment>
<comment type="catalytic activity">
    <reaction evidence="1">
        <text>4 Fe(II)-[cytochrome c] + O2 + 8 H(+)(in) = 4 Fe(III)-[cytochrome c] + 2 H2O + 4 H(+)(out)</text>
        <dbReference type="Rhea" id="RHEA:11436"/>
        <dbReference type="Rhea" id="RHEA-COMP:10350"/>
        <dbReference type="Rhea" id="RHEA-COMP:14399"/>
        <dbReference type="ChEBI" id="CHEBI:15377"/>
        <dbReference type="ChEBI" id="CHEBI:15378"/>
        <dbReference type="ChEBI" id="CHEBI:15379"/>
        <dbReference type="ChEBI" id="CHEBI:29033"/>
        <dbReference type="ChEBI" id="CHEBI:29034"/>
        <dbReference type="EC" id="7.1.1.9"/>
    </reaction>
    <physiologicalReaction direction="left-to-right" evidence="1">
        <dbReference type="Rhea" id="RHEA:11437"/>
    </physiologicalReaction>
</comment>
<comment type="cofactor">
    <cofactor evidence="1">
        <name>Cu cation</name>
        <dbReference type="ChEBI" id="CHEBI:23378"/>
    </cofactor>
    <text evidence="1">Binds a dinuclear copper A center per subunit.</text>
</comment>
<comment type="subunit">
    <text evidence="1">Component of the cytochrome c oxidase (complex IV, CIV), a multisubunit enzyme composed of a catalytic core of 3 subunits and several supernumerary subunits. The complex exists as a monomer or a dimer and forms supercomplexes (SCs) in the inner mitochondrial membrane with ubiquinol-cytochrome c oxidoreductase (cytochrome b-c1 complex, complex III, CIII).</text>
</comment>
<comment type="subcellular location">
    <subcellularLocation>
        <location evidence="1">Mitochondrion inner membrane</location>
        <topology evidence="1">Multi-pass membrane protein</topology>
    </subcellularLocation>
</comment>
<comment type="similarity">
    <text evidence="3">Belongs to the cytochrome c oxidase subunit 2 family.</text>
</comment>
<gene>
    <name type="primary">COII</name>
</gene>
<keyword id="KW-0186">Copper</keyword>
<keyword id="KW-0249">Electron transport</keyword>
<keyword id="KW-0460">Magnesium</keyword>
<keyword id="KW-0472">Membrane</keyword>
<keyword id="KW-0479">Metal-binding</keyword>
<keyword id="KW-0496">Mitochondrion</keyword>
<keyword id="KW-0999">Mitochondrion inner membrane</keyword>
<keyword id="KW-0679">Respiratory chain</keyword>
<keyword id="KW-1278">Translocase</keyword>
<keyword id="KW-0812">Transmembrane</keyword>
<keyword id="KW-1133">Transmembrane helix</keyword>
<keyword id="KW-0813">Transport</keyword>
<name>COX2_APIKO</name>
<reference key="1">
    <citation type="journal article" date="1992" name="Mol. Phylogenet. Evol.">
        <title>Phylogenetic relationships in the honeybee (genus Apis) as determined by the sequence of the cytochrome oxidase II region of mitochondrial DNA.</title>
        <authorList>
            <person name="Willis L.G."/>
            <person name="Winston M.L."/>
            <person name="Honda B.M."/>
        </authorList>
    </citation>
    <scope>NUCLEOTIDE SEQUENCE [GENOMIC DNA]</scope>
</reference>
<evidence type="ECO:0000250" key="1">
    <source>
        <dbReference type="UniProtKB" id="P00410"/>
    </source>
</evidence>
<evidence type="ECO:0000255" key="2"/>
<evidence type="ECO:0000305" key="3"/>
<accession>P50268</accession>
<protein>
    <recommendedName>
        <fullName>Cytochrome c oxidase subunit 2</fullName>
        <ecNumber>7.1.1.9</ecNumber>
    </recommendedName>
    <alternativeName>
        <fullName>Cytochrome c oxidase polypeptide II</fullName>
    </alternativeName>
</protein>